<comment type="function">
    <text evidence="1">NDH-1 shuttles electrons from NADH, via FMN and iron-sulfur (Fe-S) centers, to quinones in the respiratory chain. The immediate electron acceptor for the enzyme in this species is believed to be ubiquinone. Couples the redox reaction to proton translocation (for every two electrons transferred, four hydrogen ions are translocated across the cytoplasmic membrane), and thus conserves the redox energy in a proton gradient.</text>
</comment>
<comment type="catalytic activity">
    <reaction evidence="1">
        <text>a quinone + NADH + 5 H(+)(in) = a quinol + NAD(+) + 4 H(+)(out)</text>
        <dbReference type="Rhea" id="RHEA:57888"/>
        <dbReference type="ChEBI" id="CHEBI:15378"/>
        <dbReference type="ChEBI" id="CHEBI:24646"/>
        <dbReference type="ChEBI" id="CHEBI:57540"/>
        <dbReference type="ChEBI" id="CHEBI:57945"/>
        <dbReference type="ChEBI" id="CHEBI:132124"/>
    </reaction>
</comment>
<comment type="subunit">
    <text evidence="1">NDH-1 is composed of 13 different subunits. Subunits NuoA, H, J, K, L, M, N constitute the membrane sector of the complex.</text>
</comment>
<comment type="subcellular location">
    <subcellularLocation>
        <location evidence="1">Cell inner membrane</location>
        <topology evidence="1">Multi-pass membrane protein</topology>
    </subcellularLocation>
</comment>
<comment type="similarity">
    <text evidence="1">Belongs to the complex I subunit 3 family.</text>
</comment>
<proteinExistence type="inferred from homology"/>
<feature type="chain" id="PRO_5000236823" description="NADH-quinone oxidoreductase subunit A">
    <location>
        <begin position="1"/>
        <end position="166"/>
    </location>
</feature>
<feature type="transmembrane region" description="Helical" evidence="1">
    <location>
        <begin position="16"/>
        <end position="36"/>
    </location>
</feature>
<feature type="transmembrane region" description="Helical" evidence="1">
    <location>
        <begin position="68"/>
        <end position="88"/>
    </location>
</feature>
<feature type="transmembrane region" description="Helical" evidence="1">
    <location>
        <begin position="98"/>
        <end position="118"/>
    </location>
</feature>
<feature type="region of interest" description="Disordered" evidence="2">
    <location>
        <begin position="141"/>
        <end position="166"/>
    </location>
</feature>
<evidence type="ECO:0000255" key="1">
    <source>
        <dbReference type="HAMAP-Rule" id="MF_01394"/>
    </source>
</evidence>
<evidence type="ECO:0000256" key="2">
    <source>
        <dbReference type="SAM" id="MobiDB-lite"/>
    </source>
</evidence>
<organism>
    <name type="scientific">Yersinia pestis (strain Pestoides F)</name>
    <dbReference type="NCBI Taxonomy" id="386656"/>
    <lineage>
        <taxon>Bacteria</taxon>
        <taxon>Pseudomonadati</taxon>
        <taxon>Pseudomonadota</taxon>
        <taxon>Gammaproteobacteria</taxon>
        <taxon>Enterobacterales</taxon>
        <taxon>Yersiniaceae</taxon>
        <taxon>Yersinia</taxon>
    </lineage>
</organism>
<sequence>MRMSTTTEIIAHHWAFAVFLIGAVGLCGLMLLGAYFLGGRAQARAKNVPYESGIDSVGSARMRLSAKFYLVAMFFVIFDVEALYLYAWSISIRESGWIGFIEAAIFILVLLAGLFYLVRIGALDWTPTRSNRRVSKPSTVRYASSHPQDISQELSVAGSQQANESR</sequence>
<dbReference type="EC" id="7.1.1.-" evidence="1"/>
<dbReference type="EMBL" id="CP000668">
    <property type="protein sequence ID" value="ABP40348.1"/>
    <property type="molecule type" value="Genomic_DNA"/>
</dbReference>
<dbReference type="RefSeq" id="WP_002210279.1">
    <property type="nucleotide sequence ID" value="NZ_CP009715.1"/>
</dbReference>
<dbReference type="SMR" id="A4TM36"/>
<dbReference type="KEGG" id="ypp:YPDSF_1965"/>
<dbReference type="GO" id="GO:0030964">
    <property type="term" value="C:NADH dehydrogenase complex"/>
    <property type="evidence" value="ECO:0007669"/>
    <property type="project" value="TreeGrafter"/>
</dbReference>
<dbReference type="GO" id="GO:0005886">
    <property type="term" value="C:plasma membrane"/>
    <property type="evidence" value="ECO:0007669"/>
    <property type="project" value="UniProtKB-SubCell"/>
</dbReference>
<dbReference type="GO" id="GO:0008137">
    <property type="term" value="F:NADH dehydrogenase (ubiquinone) activity"/>
    <property type="evidence" value="ECO:0007669"/>
    <property type="project" value="InterPro"/>
</dbReference>
<dbReference type="GO" id="GO:0050136">
    <property type="term" value="F:NADH:ubiquinone reductase (non-electrogenic) activity"/>
    <property type="evidence" value="ECO:0007669"/>
    <property type="project" value="UniProtKB-UniRule"/>
</dbReference>
<dbReference type="GO" id="GO:0048038">
    <property type="term" value="F:quinone binding"/>
    <property type="evidence" value="ECO:0007669"/>
    <property type="project" value="UniProtKB-KW"/>
</dbReference>
<dbReference type="FunFam" id="1.20.58.1610:FF:000003">
    <property type="entry name" value="NADH-quinone oxidoreductase subunit A"/>
    <property type="match status" value="1"/>
</dbReference>
<dbReference type="Gene3D" id="1.20.58.1610">
    <property type="entry name" value="NADH:ubiquinone/plastoquinone oxidoreductase, chain 3"/>
    <property type="match status" value="1"/>
</dbReference>
<dbReference type="HAMAP" id="MF_01394">
    <property type="entry name" value="NDH1_NuoA"/>
    <property type="match status" value="1"/>
</dbReference>
<dbReference type="InterPro" id="IPR023043">
    <property type="entry name" value="NAD(P)H_OxRDtase_bac/plastid"/>
</dbReference>
<dbReference type="InterPro" id="IPR000440">
    <property type="entry name" value="NADH_UbQ/plastoQ_OxRdtase_su3"/>
</dbReference>
<dbReference type="InterPro" id="IPR038430">
    <property type="entry name" value="NDAH_ubi_oxred_su3_sf"/>
</dbReference>
<dbReference type="PANTHER" id="PTHR11058:SF21">
    <property type="entry name" value="NADH-QUINONE OXIDOREDUCTASE SUBUNIT A"/>
    <property type="match status" value="1"/>
</dbReference>
<dbReference type="PANTHER" id="PTHR11058">
    <property type="entry name" value="NADH-UBIQUINONE OXIDOREDUCTASE CHAIN 3"/>
    <property type="match status" value="1"/>
</dbReference>
<dbReference type="Pfam" id="PF00507">
    <property type="entry name" value="Oxidored_q4"/>
    <property type="match status" value="1"/>
</dbReference>
<protein>
    <recommendedName>
        <fullName evidence="1">NADH-quinone oxidoreductase subunit A</fullName>
        <ecNumber evidence="1">7.1.1.-</ecNumber>
    </recommendedName>
    <alternativeName>
        <fullName evidence="1">NADH dehydrogenase I subunit A</fullName>
    </alternativeName>
    <alternativeName>
        <fullName evidence="1">NDH-1 subunit A</fullName>
    </alternativeName>
    <alternativeName>
        <fullName evidence="1">NUO1</fullName>
    </alternativeName>
</protein>
<accession>A4TM36</accession>
<name>NUOA_YERPP</name>
<keyword id="KW-0997">Cell inner membrane</keyword>
<keyword id="KW-1003">Cell membrane</keyword>
<keyword id="KW-0472">Membrane</keyword>
<keyword id="KW-0520">NAD</keyword>
<keyword id="KW-0874">Quinone</keyword>
<keyword id="KW-1278">Translocase</keyword>
<keyword id="KW-0812">Transmembrane</keyword>
<keyword id="KW-1133">Transmembrane helix</keyword>
<keyword id="KW-0813">Transport</keyword>
<keyword id="KW-0830">Ubiquinone</keyword>
<gene>
    <name evidence="1" type="primary">nuoA</name>
    <name type="ordered locus">YPDSF_1965</name>
</gene>
<reference key="1">
    <citation type="submission" date="2007-02" db="EMBL/GenBank/DDBJ databases">
        <title>Complete sequence of chromosome of Yersinia pestis Pestoides F.</title>
        <authorList>
            <consortium name="US DOE Joint Genome Institute"/>
            <person name="Copeland A."/>
            <person name="Lucas S."/>
            <person name="Lapidus A."/>
            <person name="Barry K."/>
            <person name="Detter J.C."/>
            <person name="Glavina del Rio T."/>
            <person name="Hammon N."/>
            <person name="Israni S."/>
            <person name="Dalin E."/>
            <person name="Tice H."/>
            <person name="Pitluck S."/>
            <person name="Di Bartolo G."/>
            <person name="Chain P."/>
            <person name="Malfatti S."/>
            <person name="Shin M."/>
            <person name="Vergez L."/>
            <person name="Schmutz J."/>
            <person name="Larimer F."/>
            <person name="Land M."/>
            <person name="Hauser L."/>
            <person name="Worsham P."/>
            <person name="Chu M."/>
            <person name="Bearden S."/>
            <person name="Garcia E."/>
            <person name="Richardson P."/>
        </authorList>
    </citation>
    <scope>NUCLEOTIDE SEQUENCE [LARGE SCALE GENOMIC DNA]</scope>
    <source>
        <strain>Pestoides F</strain>
    </source>
</reference>